<proteinExistence type="inferred from homology"/>
<organism>
    <name type="scientific">Sphingopyxis alaskensis (strain DSM 13593 / LMG 18877 / RB2256)</name>
    <name type="common">Sphingomonas alaskensis</name>
    <dbReference type="NCBI Taxonomy" id="317655"/>
    <lineage>
        <taxon>Bacteria</taxon>
        <taxon>Pseudomonadati</taxon>
        <taxon>Pseudomonadota</taxon>
        <taxon>Alphaproteobacteria</taxon>
        <taxon>Sphingomonadales</taxon>
        <taxon>Sphingomonadaceae</taxon>
        <taxon>Sphingopyxis</taxon>
    </lineage>
</organism>
<dbReference type="EC" id="6.3.4.5" evidence="1"/>
<dbReference type="EMBL" id="CP000356">
    <property type="protein sequence ID" value="ABF52216.1"/>
    <property type="molecule type" value="Genomic_DNA"/>
</dbReference>
<dbReference type="RefSeq" id="WP_011540807.1">
    <property type="nucleotide sequence ID" value="NC_008048.1"/>
</dbReference>
<dbReference type="SMR" id="Q1GVV6"/>
<dbReference type="STRING" id="317655.Sala_0495"/>
<dbReference type="KEGG" id="sal:Sala_0495"/>
<dbReference type="eggNOG" id="COG0137">
    <property type="taxonomic scope" value="Bacteria"/>
</dbReference>
<dbReference type="HOGENOM" id="CLU_032784_4_2_5"/>
<dbReference type="OrthoDB" id="9801641at2"/>
<dbReference type="UniPathway" id="UPA00068">
    <property type="reaction ID" value="UER00113"/>
</dbReference>
<dbReference type="Proteomes" id="UP000006578">
    <property type="component" value="Chromosome"/>
</dbReference>
<dbReference type="GO" id="GO:0005737">
    <property type="term" value="C:cytoplasm"/>
    <property type="evidence" value="ECO:0007669"/>
    <property type="project" value="UniProtKB-SubCell"/>
</dbReference>
<dbReference type="GO" id="GO:0004055">
    <property type="term" value="F:argininosuccinate synthase activity"/>
    <property type="evidence" value="ECO:0007669"/>
    <property type="project" value="UniProtKB-UniRule"/>
</dbReference>
<dbReference type="GO" id="GO:0005524">
    <property type="term" value="F:ATP binding"/>
    <property type="evidence" value="ECO:0007669"/>
    <property type="project" value="UniProtKB-UniRule"/>
</dbReference>
<dbReference type="GO" id="GO:0000053">
    <property type="term" value="P:argininosuccinate metabolic process"/>
    <property type="evidence" value="ECO:0007669"/>
    <property type="project" value="TreeGrafter"/>
</dbReference>
<dbReference type="GO" id="GO:0006526">
    <property type="term" value="P:L-arginine biosynthetic process"/>
    <property type="evidence" value="ECO:0007669"/>
    <property type="project" value="UniProtKB-UniRule"/>
</dbReference>
<dbReference type="GO" id="GO:0000050">
    <property type="term" value="P:urea cycle"/>
    <property type="evidence" value="ECO:0007669"/>
    <property type="project" value="TreeGrafter"/>
</dbReference>
<dbReference type="CDD" id="cd01999">
    <property type="entry name" value="ASS"/>
    <property type="match status" value="1"/>
</dbReference>
<dbReference type="FunFam" id="3.40.50.620:FF:000019">
    <property type="entry name" value="Argininosuccinate synthase"/>
    <property type="match status" value="1"/>
</dbReference>
<dbReference type="FunFam" id="3.90.1260.10:FF:000007">
    <property type="entry name" value="Argininosuccinate synthase"/>
    <property type="match status" value="1"/>
</dbReference>
<dbReference type="Gene3D" id="3.90.1260.10">
    <property type="entry name" value="Argininosuccinate synthetase, chain A, domain 2"/>
    <property type="match status" value="1"/>
</dbReference>
<dbReference type="Gene3D" id="3.40.50.620">
    <property type="entry name" value="HUPs"/>
    <property type="match status" value="1"/>
</dbReference>
<dbReference type="Gene3D" id="1.20.5.470">
    <property type="entry name" value="Single helix bin"/>
    <property type="match status" value="1"/>
</dbReference>
<dbReference type="HAMAP" id="MF_00005">
    <property type="entry name" value="Arg_succ_synth_type1"/>
    <property type="match status" value="1"/>
</dbReference>
<dbReference type="InterPro" id="IPR048268">
    <property type="entry name" value="Arginosuc_syn_C"/>
</dbReference>
<dbReference type="InterPro" id="IPR048267">
    <property type="entry name" value="Arginosuc_syn_N"/>
</dbReference>
<dbReference type="InterPro" id="IPR001518">
    <property type="entry name" value="Arginosuc_synth"/>
</dbReference>
<dbReference type="InterPro" id="IPR018223">
    <property type="entry name" value="Arginosuc_synth_CS"/>
</dbReference>
<dbReference type="InterPro" id="IPR023434">
    <property type="entry name" value="Arginosuc_synth_type_1_subfam"/>
</dbReference>
<dbReference type="InterPro" id="IPR024074">
    <property type="entry name" value="AS_cat/multimer_dom_body"/>
</dbReference>
<dbReference type="InterPro" id="IPR014729">
    <property type="entry name" value="Rossmann-like_a/b/a_fold"/>
</dbReference>
<dbReference type="NCBIfam" id="TIGR00032">
    <property type="entry name" value="argG"/>
    <property type="match status" value="1"/>
</dbReference>
<dbReference type="NCBIfam" id="NF001770">
    <property type="entry name" value="PRK00509.1"/>
    <property type="match status" value="1"/>
</dbReference>
<dbReference type="PANTHER" id="PTHR11587">
    <property type="entry name" value="ARGININOSUCCINATE SYNTHASE"/>
    <property type="match status" value="1"/>
</dbReference>
<dbReference type="PANTHER" id="PTHR11587:SF2">
    <property type="entry name" value="ARGININOSUCCINATE SYNTHASE"/>
    <property type="match status" value="1"/>
</dbReference>
<dbReference type="Pfam" id="PF20979">
    <property type="entry name" value="Arginosuc_syn_C"/>
    <property type="match status" value="1"/>
</dbReference>
<dbReference type="Pfam" id="PF00764">
    <property type="entry name" value="Arginosuc_synth"/>
    <property type="match status" value="1"/>
</dbReference>
<dbReference type="SUPFAM" id="SSF52402">
    <property type="entry name" value="Adenine nucleotide alpha hydrolases-like"/>
    <property type="match status" value="1"/>
</dbReference>
<dbReference type="SUPFAM" id="SSF69864">
    <property type="entry name" value="Argininosuccinate synthetase, C-terminal domain"/>
    <property type="match status" value="1"/>
</dbReference>
<dbReference type="PROSITE" id="PS00564">
    <property type="entry name" value="ARGININOSUCCIN_SYN_1"/>
    <property type="match status" value="1"/>
</dbReference>
<dbReference type="PROSITE" id="PS00565">
    <property type="entry name" value="ARGININOSUCCIN_SYN_2"/>
    <property type="match status" value="1"/>
</dbReference>
<accession>Q1GVV6</accession>
<protein>
    <recommendedName>
        <fullName evidence="1">Argininosuccinate synthase</fullName>
        <ecNumber evidence="1">6.3.4.5</ecNumber>
    </recommendedName>
    <alternativeName>
        <fullName evidence="1">Citrulline--aspartate ligase</fullName>
    </alternativeName>
</protein>
<gene>
    <name evidence="1" type="primary">argG</name>
    <name type="ordered locus">Sala_0495</name>
</gene>
<sequence length="405" mass="45137">MSDSIKRVVLAYSGGLDTSVILKWLQVTYGCEVVTFTADLGQGEELEPARAKAELMGIKPEHIYIDDLREEFVRDFVFPMMRANARYEGDYLLGTSIARPLISKRLVEIARETGADAVAHGATGKGNDQVRFELSAYALNPDIKVIAPWREWDLTSRTALIAWAEQHQIPVPKDKRGESPFSTDANLLHTSSEGKVLEDPWEETPDYVYSRTVNPEDAPDTPEYITIDFERGDGVALNGQAMSPATLLAALNDLGRKHGIGRLDLVENRFVGMKSRGMYETPGGEIYARAHRGIESITLDRGAAHLKDELMPKYAELIYNGFWFAPEREMLQAAIDHSQANVTGTVRLKLYKGNASVVGRKSPFSLYSERHVTFEDDAGAYDQKDAAGFIRLNALRLKLLARQGR</sequence>
<reference key="1">
    <citation type="journal article" date="2009" name="Proc. Natl. Acad. Sci. U.S.A.">
        <title>The genomic basis of trophic strategy in marine bacteria.</title>
        <authorList>
            <person name="Lauro F.M."/>
            <person name="McDougald D."/>
            <person name="Thomas T."/>
            <person name="Williams T.J."/>
            <person name="Egan S."/>
            <person name="Rice S."/>
            <person name="DeMaere M.Z."/>
            <person name="Ting L."/>
            <person name="Ertan H."/>
            <person name="Johnson J."/>
            <person name="Ferriera S."/>
            <person name="Lapidus A."/>
            <person name="Anderson I."/>
            <person name="Kyrpides N."/>
            <person name="Munk A.C."/>
            <person name="Detter C."/>
            <person name="Han C.S."/>
            <person name="Brown M.V."/>
            <person name="Robb F.T."/>
            <person name="Kjelleberg S."/>
            <person name="Cavicchioli R."/>
        </authorList>
    </citation>
    <scope>NUCLEOTIDE SEQUENCE [LARGE SCALE GENOMIC DNA]</scope>
    <source>
        <strain>DSM 13593 / LMG 18877 / RB2256</strain>
    </source>
</reference>
<comment type="catalytic activity">
    <reaction evidence="1">
        <text>L-citrulline + L-aspartate + ATP = 2-(N(omega)-L-arginino)succinate + AMP + diphosphate + H(+)</text>
        <dbReference type="Rhea" id="RHEA:10932"/>
        <dbReference type="ChEBI" id="CHEBI:15378"/>
        <dbReference type="ChEBI" id="CHEBI:29991"/>
        <dbReference type="ChEBI" id="CHEBI:30616"/>
        <dbReference type="ChEBI" id="CHEBI:33019"/>
        <dbReference type="ChEBI" id="CHEBI:57472"/>
        <dbReference type="ChEBI" id="CHEBI:57743"/>
        <dbReference type="ChEBI" id="CHEBI:456215"/>
        <dbReference type="EC" id="6.3.4.5"/>
    </reaction>
</comment>
<comment type="pathway">
    <text evidence="1">Amino-acid biosynthesis; L-arginine biosynthesis; L-arginine from L-ornithine and carbamoyl phosphate: step 2/3.</text>
</comment>
<comment type="subunit">
    <text evidence="1">Homotetramer.</text>
</comment>
<comment type="subcellular location">
    <subcellularLocation>
        <location evidence="1">Cytoplasm</location>
    </subcellularLocation>
</comment>
<comment type="similarity">
    <text evidence="1">Belongs to the argininosuccinate synthase family. Type 1 subfamily.</text>
</comment>
<name>ASSY_SPHAL</name>
<keyword id="KW-0028">Amino-acid biosynthesis</keyword>
<keyword id="KW-0055">Arginine biosynthesis</keyword>
<keyword id="KW-0067">ATP-binding</keyword>
<keyword id="KW-0963">Cytoplasm</keyword>
<keyword id="KW-0436">Ligase</keyword>
<keyword id="KW-0547">Nucleotide-binding</keyword>
<keyword id="KW-1185">Reference proteome</keyword>
<feature type="chain" id="PRO_0000263974" description="Argininosuccinate synthase">
    <location>
        <begin position="1"/>
        <end position="405"/>
    </location>
</feature>
<feature type="binding site" evidence="1">
    <location>
        <begin position="11"/>
        <end position="19"/>
    </location>
    <ligand>
        <name>ATP</name>
        <dbReference type="ChEBI" id="CHEBI:30616"/>
    </ligand>
</feature>
<feature type="binding site" evidence="1">
    <location>
        <position position="38"/>
    </location>
    <ligand>
        <name>ATP</name>
        <dbReference type="ChEBI" id="CHEBI:30616"/>
    </ligand>
</feature>
<feature type="binding site" evidence="1">
    <location>
        <position position="91"/>
    </location>
    <ligand>
        <name>L-citrulline</name>
        <dbReference type="ChEBI" id="CHEBI:57743"/>
    </ligand>
</feature>
<feature type="binding site" evidence="1">
    <location>
        <position position="96"/>
    </location>
    <ligand>
        <name>L-citrulline</name>
        <dbReference type="ChEBI" id="CHEBI:57743"/>
    </ligand>
</feature>
<feature type="binding site" evidence="1">
    <location>
        <position position="121"/>
    </location>
    <ligand>
        <name>ATP</name>
        <dbReference type="ChEBI" id="CHEBI:30616"/>
    </ligand>
</feature>
<feature type="binding site" evidence="1">
    <location>
        <position position="123"/>
    </location>
    <ligand>
        <name>L-aspartate</name>
        <dbReference type="ChEBI" id="CHEBI:29991"/>
    </ligand>
</feature>
<feature type="binding site" evidence="1">
    <location>
        <position position="127"/>
    </location>
    <ligand>
        <name>L-aspartate</name>
        <dbReference type="ChEBI" id="CHEBI:29991"/>
    </ligand>
</feature>
<feature type="binding site" evidence="1">
    <location>
        <position position="127"/>
    </location>
    <ligand>
        <name>L-citrulline</name>
        <dbReference type="ChEBI" id="CHEBI:57743"/>
    </ligand>
</feature>
<feature type="binding site" evidence="1">
    <location>
        <position position="128"/>
    </location>
    <ligand>
        <name>L-aspartate</name>
        <dbReference type="ChEBI" id="CHEBI:29991"/>
    </ligand>
</feature>
<feature type="binding site" evidence="1">
    <location>
        <position position="131"/>
    </location>
    <ligand>
        <name>L-citrulline</name>
        <dbReference type="ChEBI" id="CHEBI:57743"/>
    </ligand>
</feature>
<feature type="binding site" evidence="1">
    <location>
        <position position="182"/>
    </location>
    <ligand>
        <name>L-citrulline</name>
        <dbReference type="ChEBI" id="CHEBI:57743"/>
    </ligand>
</feature>
<feature type="binding site" evidence="1">
    <location>
        <position position="191"/>
    </location>
    <ligand>
        <name>L-citrulline</name>
        <dbReference type="ChEBI" id="CHEBI:57743"/>
    </ligand>
</feature>
<feature type="binding site" evidence="1">
    <location>
        <position position="267"/>
    </location>
    <ligand>
        <name>L-citrulline</name>
        <dbReference type="ChEBI" id="CHEBI:57743"/>
    </ligand>
</feature>
<feature type="binding site" evidence="1">
    <location>
        <position position="279"/>
    </location>
    <ligand>
        <name>L-citrulline</name>
        <dbReference type="ChEBI" id="CHEBI:57743"/>
    </ligand>
</feature>
<evidence type="ECO:0000255" key="1">
    <source>
        <dbReference type="HAMAP-Rule" id="MF_00005"/>
    </source>
</evidence>